<protein>
    <recommendedName>
        <fullName evidence="1">tRNA/tmRNA (uracil-C(5))-methyltransferase</fullName>
        <ecNumber evidence="1">2.1.1.-</ecNumber>
        <ecNumber evidence="1">2.1.1.35</ecNumber>
    </recommendedName>
    <alternativeName>
        <fullName evidence="1">tRNA (uracil(54)-C(5))-methyltransferase</fullName>
    </alternativeName>
    <alternativeName>
        <fullName evidence="1">tRNA(m5U54)-methyltransferase</fullName>
        <shortName evidence="1">RUMT</shortName>
    </alternativeName>
    <alternativeName>
        <fullName evidence="1">tmRNA (uracil(341)-C(5))-methyltransferase</fullName>
    </alternativeName>
</protein>
<dbReference type="EC" id="2.1.1.-" evidence="1"/>
<dbReference type="EC" id="2.1.1.35" evidence="1"/>
<dbReference type="EMBL" id="CP000627">
    <property type="protein sequence ID" value="ABQ21133.1"/>
    <property type="molecule type" value="Genomic_DNA"/>
</dbReference>
<dbReference type="EMBL" id="CP001235">
    <property type="protein sequence ID" value="ACP08055.1"/>
    <property type="molecule type" value="Genomic_DNA"/>
</dbReference>
<dbReference type="RefSeq" id="WP_000212218.1">
    <property type="nucleotide sequence ID" value="NZ_JAACZH010000014.1"/>
</dbReference>
<dbReference type="SMR" id="A5F4M4"/>
<dbReference type="KEGG" id="vco:VC0395_A2367"/>
<dbReference type="KEGG" id="vcr:VC395_0026"/>
<dbReference type="PATRIC" id="fig|345073.21.peg.27"/>
<dbReference type="eggNOG" id="COG2265">
    <property type="taxonomic scope" value="Bacteria"/>
</dbReference>
<dbReference type="HOGENOM" id="CLU_043022_0_0_6"/>
<dbReference type="OrthoDB" id="9804590at2"/>
<dbReference type="Proteomes" id="UP000000249">
    <property type="component" value="Chromosome 2"/>
</dbReference>
<dbReference type="GO" id="GO:0005829">
    <property type="term" value="C:cytosol"/>
    <property type="evidence" value="ECO:0007669"/>
    <property type="project" value="TreeGrafter"/>
</dbReference>
<dbReference type="GO" id="GO:0019843">
    <property type="term" value="F:rRNA binding"/>
    <property type="evidence" value="ECO:0007669"/>
    <property type="project" value="TreeGrafter"/>
</dbReference>
<dbReference type="GO" id="GO:0030697">
    <property type="term" value="F:tRNA (uracil(54)-C5)-methyltransferase activity, S-adenosyl methionine-dependent"/>
    <property type="evidence" value="ECO:0007669"/>
    <property type="project" value="UniProtKB-UniRule"/>
</dbReference>
<dbReference type="GO" id="GO:0000049">
    <property type="term" value="F:tRNA binding"/>
    <property type="evidence" value="ECO:0007669"/>
    <property type="project" value="TreeGrafter"/>
</dbReference>
<dbReference type="GO" id="GO:0030488">
    <property type="term" value="P:tRNA methylation"/>
    <property type="evidence" value="ECO:0007669"/>
    <property type="project" value="UniProtKB-UniRule"/>
</dbReference>
<dbReference type="CDD" id="cd02440">
    <property type="entry name" value="AdoMet_MTases"/>
    <property type="match status" value="1"/>
</dbReference>
<dbReference type="FunFam" id="2.40.50.1070:FF:000001">
    <property type="entry name" value="tRNA/tmRNA (uracil-C(5))-methyltransferase"/>
    <property type="match status" value="1"/>
</dbReference>
<dbReference type="FunFam" id="3.40.50.150:FF:000012">
    <property type="entry name" value="tRNA/tmRNA (uracil-C(5))-methyltransferase"/>
    <property type="match status" value="1"/>
</dbReference>
<dbReference type="Gene3D" id="2.40.50.1070">
    <property type="match status" value="1"/>
</dbReference>
<dbReference type="Gene3D" id="3.40.50.150">
    <property type="entry name" value="Vaccinia Virus protein VP39"/>
    <property type="match status" value="1"/>
</dbReference>
<dbReference type="HAMAP" id="MF_01011">
    <property type="entry name" value="RNA_methyltr_TrmA"/>
    <property type="match status" value="1"/>
</dbReference>
<dbReference type="InterPro" id="IPR030390">
    <property type="entry name" value="MeTrfase_TrmA_AS"/>
</dbReference>
<dbReference type="InterPro" id="IPR030391">
    <property type="entry name" value="MeTrfase_TrmA_CS"/>
</dbReference>
<dbReference type="InterPro" id="IPR029063">
    <property type="entry name" value="SAM-dependent_MTases_sf"/>
</dbReference>
<dbReference type="InterPro" id="IPR011869">
    <property type="entry name" value="TrmA_MeTrfase"/>
</dbReference>
<dbReference type="InterPro" id="IPR010280">
    <property type="entry name" value="U5_MeTrfase_fam"/>
</dbReference>
<dbReference type="NCBIfam" id="TIGR02143">
    <property type="entry name" value="trmA_only"/>
    <property type="match status" value="1"/>
</dbReference>
<dbReference type="PANTHER" id="PTHR47790">
    <property type="entry name" value="TRNA/TMRNA (URACIL-C(5))-METHYLTRANSFERASE"/>
    <property type="match status" value="1"/>
</dbReference>
<dbReference type="PANTHER" id="PTHR47790:SF2">
    <property type="entry name" value="TRNA_TMRNA (URACIL-C(5))-METHYLTRANSFERASE"/>
    <property type="match status" value="1"/>
</dbReference>
<dbReference type="Pfam" id="PF05958">
    <property type="entry name" value="tRNA_U5-meth_tr"/>
    <property type="match status" value="1"/>
</dbReference>
<dbReference type="SUPFAM" id="SSF53335">
    <property type="entry name" value="S-adenosyl-L-methionine-dependent methyltransferases"/>
    <property type="match status" value="1"/>
</dbReference>
<dbReference type="PROSITE" id="PS51687">
    <property type="entry name" value="SAM_MT_RNA_M5U"/>
    <property type="match status" value="1"/>
</dbReference>
<dbReference type="PROSITE" id="PS01230">
    <property type="entry name" value="TRMA_1"/>
    <property type="match status" value="1"/>
</dbReference>
<dbReference type="PROSITE" id="PS01231">
    <property type="entry name" value="TRMA_2"/>
    <property type="match status" value="1"/>
</dbReference>
<feature type="chain" id="PRO_1000072916" description="tRNA/tmRNA (uracil-C(5))-methyltransferase">
    <location>
        <begin position="1"/>
        <end position="369"/>
    </location>
</feature>
<feature type="active site" description="Nucleophile" evidence="1">
    <location>
        <position position="326"/>
    </location>
</feature>
<feature type="active site" description="Proton acceptor" evidence="1">
    <location>
        <position position="360"/>
    </location>
</feature>
<feature type="binding site" evidence="1">
    <location>
        <position position="190"/>
    </location>
    <ligand>
        <name>S-adenosyl-L-methionine</name>
        <dbReference type="ChEBI" id="CHEBI:59789"/>
    </ligand>
</feature>
<feature type="binding site" evidence="1">
    <location>
        <position position="218"/>
    </location>
    <ligand>
        <name>S-adenosyl-L-methionine</name>
        <dbReference type="ChEBI" id="CHEBI:59789"/>
    </ligand>
</feature>
<feature type="binding site" evidence="1">
    <location>
        <position position="223"/>
    </location>
    <ligand>
        <name>S-adenosyl-L-methionine</name>
        <dbReference type="ChEBI" id="CHEBI:59789"/>
    </ligand>
</feature>
<feature type="binding site" evidence="1">
    <location>
        <position position="239"/>
    </location>
    <ligand>
        <name>S-adenosyl-L-methionine</name>
        <dbReference type="ChEBI" id="CHEBI:59789"/>
    </ligand>
</feature>
<feature type="binding site" evidence="1">
    <location>
        <position position="301"/>
    </location>
    <ligand>
        <name>S-adenosyl-L-methionine</name>
        <dbReference type="ChEBI" id="CHEBI:59789"/>
    </ligand>
</feature>
<proteinExistence type="inferred from homology"/>
<gene>
    <name evidence="1" type="primary">trmA</name>
    <name type="ordered locus">VC0395_A2367</name>
    <name type="ordered locus">VC395_0026</name>
</gene>
<name>TRMA_VIBC3</name>
<keyword id="KW-0489">Methyltransferase</keyword>
<keyword id="KW-0949">S-adenosyl-L-methionine</keyword>
<keyword id="KW-0808">Transferase</keyword>
<keyword id="KW-0819">tRNA processing</keyword>
<comment type="function">
    <text evidence="1">Dual-specificity methyltransferase that catalyzes the formation of 5-methyluridine at position 54 (m5U54) in all tRNAs, and that of position 341 (m5U341) in tmRNA (transfer-mRNA).</text>
</comment>
<comment type="catalytic activity">
    <reaction evidence="1">
        <text>uridine(54) in tRNA + S-adenosyl-L-methionine = 5-methyluridine(54) in tRNA + S-adenosyl-L-homocysteine + H(+)</text>
        <dbReference type="Rhea" id="RHEA:42712"/>
        <dbReference type="Rhea" id="RHEA-COMP:10167"/>
        <dbReference type="Rhea" id="RHEA-COMP:10193"/>
        <dbReference type="ChEBI" id="CHEBI:15378"/>
        <dbReference type="ChEBI" id="CHEBI:57856"/>
        <dbReference type="ChEBI" id="CHEBI:59789"/>
        <dbReference type="ChEBI" id="CHEBI:65315"/>
        <dbReference type="ChEBI" id="CHEBI:74447"/>
        <dbReference type="EC" id="2.1.1.35"/>
    </reaction>
</comment>
<comment type="catalytic activity">
    <reaction evidence="1">
        <text>uridine(341) in tmRNA + S-adenosyl-L-methionine = 5-methyluridine(341) in tmRNA + S-adenosyl-L-homocysteine + H(+)</text>
        <dbReference type="Rhea" id="RHEA:43612"/>
        <dbReference type="Rhea" id="RHEA-COMP:10630"/>
        <dbReference type="Rhea" id="RHEA-COMP:10631"/>
        <dbReference type="ChEBI" id="CHEBI:15378"/>
        <dbReference type="ChEBI" id="CHEBI:57856"/>
        <dbReference type="ChEBI" id="CHEBI:59789"/>
        <dbReference type="ChEBI" id="CHEBI:65315"/>
        <dbReference type="ChEBI" id="CHEBI:74447"/>
    </reaction>
</comment>
<comment type="similarity">
    <text evidence="1">Belongs to the class I-like SAM-binding methyltransferase superfamily. RNA M5U methyltransferase family. TrmA subfamily.</text>
</comment>
<accession>A5F4M4</accession>
<accession>C3M291</accession>
<evidence type="ECO:0000255" key="1">
    <source>
        <dbReference type="HAMAP-Rule" id="MF_01011"/>
    </source>
</evidence>
<organism>
    <name type="scientific">Vibrio cholerae serotype O1 (strain ATCC 39541 / Classical Ogawa 395 / O395)</name>
    <dbReference type="NCBI Taxonomy" id="345073"/>
    <lineage>
        <taxon>Bacteria</taxon>
        <taxon>Pseudomonadati</taxon>
        <taxon>Pseudomonadota</taxon>
        <taxon>Gammaproteobacteria</taxon>
        <taxon>Vibrionales</taxon>
        <taxon>Vibrionaceae</taxon>
        <taxon>Vibrio</taxon>
    </lineage>
</organism>
<reference key="1">
    <citation type="submission" date="2007-03" db="EMBL/GenBank/DDBJ databases">
        <authorList>
            <person name="Heidelberg J."/>
        </authorList>
    </citation>
    <scope>NUCLEOTIDE SEQUENCE [LARGE SCALE GENOMIC DNA]</scope>
    <source>
        <strain>ATCC 39541 / Classical Ogawa 395 / O395</strain>
    </source>
</reference>
<reference key="2">
    <citation type="journal article" date="2008" name="PLoS ONE">
        <title>A recalibrated molecular clock and independent origins for the cholera pandemic clones.</title>
        <authorList>
            <person name="Feng L."/>
            <person name="Reeves P.R."/>
            <person name="Lan R."/>
            <person name="Ren Y."/>
            <person name="Gao C."/>
            <person name="Zhou Z."/>
            <person name="Ren Y."/>
            <person name="Cheng J."/>
            <person name="Wang W."/>
            <person name="Wang J."/>
            <person name="Qian W."/>
            <person name="Li D."/>
            <person name="Wang L."/>
        </authorList>
    </citation>
    <scope>NUCLEOTIDE SEQUENCE [LARGE SCALE GENOMIC DNA]</scope>
    <source>
        <strain>ATCC 39541 / Classical Ogawa 395 / O395</strain>
    </source>
</reference>
<sequence>MATLDVNPELYQAQLADKIARLKAMFVDYSMPELEVFESPVANYRMRAEFRIWHEGDDMYYIMFNQETREKYRVDQFPAASRLINDLMPLLMDAMKGSPILRHKLFQVDFLSTLSGEILVSLLYHRQLSEEWITAAQALKQRLNDEGFNLNLIGRARKMKVVLDRDYVVENLQVNGQPYVYKQVENSFTQPNAKVAEKMLEWAVDCTQESKGDLLELYCGNGNFSLALAQNFERVLATELAKPSVEAAQFNIAANQIGNVQIIRMSAEEFTQAMEGKREFNRLKDAGVDLQSYRCNTIFVDPPRSGMDIDTCKMVQGYERILYISCNPETLQENLQVLGETHQVVRFALFDQFPYTHHMEAGVMLERKK</sequence>